<gene>
    <name evidence="1" type="primary">rsmH</name>
    <name type="synonym">mraW</name>
</gene>
<evidence type="ECO:0000255" key="1">
    <source>
        <dbReference type="HAMAP-Rule" id="MF_01007"/>
    </source>
</evidence>
<feature type="chain" id="PRO_0000108704" description="Ribosomal RNA small subunit methyltransferase H">
    <location>
        <begin position="1"/>
        <end position="313"/>
    </location>
</feature>
<feature type="binding site" evidence="1">
    <location>
        <begin position="33"/>
        <end position="35"/>
    </location>
    <ligand>
        <name>S-adenosyl-L-methionine</name>
        <dbReference type="ChEBI" id="CHEBI:59789"/>
    </ligand>
</feature>
<feature type="binding site" evidence="1">
    <location>
        <position position="52"/>
    </location>
    <ligand>
        <name>S-adenosyl-L-methionine</name>
        <dbReference type="ChEBI" id="CHEBI:59789"/>
    </ligand>
</feature>
<feature type="binding site" evidence="1">
    <location>
        <position position="80"/>
    </location>
    <ligand>
        <name>S-adenosyl-L-methionine</name>
        <dbReference type="ChEBI" id="CHEBI:59789"/>
    </ligand>
</feature>
<feature type="binding site" evidence="1">
    <location>
        <position position="101"/>
    </location>
    <ligand>
        <name>S-adenosyl-L-methionine</name>
        <dbReference type="ChEBI" id="CHEBI:59789"/>
    </ligand>
</feature>
<feature type="binding site" evidence="1">
    <location>
        <position position="108"/>
    </location>
    <ligand>
        <name>S-adenosyl-L-methionine</name>
        <dbReference type="ChEBI" id="CHEBI:59789"/>
    </ligand>
</feature>
<sequence>MEFKHQTVLLQEAISGLNVQNNGIYVDCTLGRAGHSLEILKHLPNGKLYCFEQDEAAIVVSEEILQKSKYRNYEIIKNNFVNLAAELQLRNVKAVNGILYDLGVSSPQLDDDKRGFSYRYDSPLDMRMNQHQGLTAKTVVNTYSQEALVKLFQDYGEEPFAKVIAKTIVIARNEQEIVTTFHLVEIIKKSLPQKILKKAKHPAKRVFQALRIEVNQELFVLQESLRQATTLLAVHGRLVVISFHSLEDRIVKKYFQSLTKDPNYEINQQLPAISYFESDYHIITKKVIVSSVTEQTNNHRSRSAKLRILERVK</sequence>
<accession>P60399</accession>
<proteinExistence type="inferred from homology"/>
<name>RSMH_SPIKU</name>
<dbReference type="EC" id="2.1.1.199" evidence="1"/>
<dbReference type="EMBL" id="AY198132">
    <property type="protein sequence ID" value="AAP42766.1"/>
    <property type="molecule type" value="Genomic_DNA"/>
</dbReference>
<dbReference type="SMR" id="P60399"/>
<dbReference type="GO" id="GO:0005737">
    <property type="term" value="C:cytoplasm"/>
    <property type="evidence" value="ECO:0007669"/>
    <property type="project" value="UniProtKB-SubCell"/>
</dbReference>
<dbReference type="GO" id="GO:0071424">
    <property type="term" value="F:rRNA (cytosine-N4-)-methyltransferase activity"/>
    <property type="evidence" value="ECO:0007669"/>
    <property type="project" value="UniProtKB-UniRule"/>
</dbReference>
<dbReference type="GO" id="GO:0070475">
    <property type="term" value="P:rRNA base methylation"/>
    <property type="evidence" value="ECO:0007669"/>
    <property type="project" value="UniProtKB-UniRule"/>
</dbReference>
<dbReference type="FunFam" id="1.10.150.170:FF:000003">
    <property type="entry name" value="Ribosomal RNA small subunit methyltransferase H"/>
    <property type="match status" value="1"/>
</dbReference>
<dbReference type="Gene3D" id="1.10.150.170">
    <property type="entry name" value="Putative methyltransferase TM0872, insert domain"/>
    <property type="match status" value="1"/>
</dbReference>
<dbReference type="Gene3D" id="3.40.50.150">
    <property type="entry name" value="Vaccinia Virus protein VP39"/>
    <property type="match status" value="1"/>
</dbReference>
<dbReference type="HAMAP" id="MF_01007">
    <property type="entry name" value="16SrRNA_methyltr_H"/>
    <property type="match status" value="1"/>
</dbReference>
<dbReference type="InterPro" id="IPR002903">
    <property type="entry name" value="RsmH"/>
</dbReference>
<dbReference type="InterPro" id="IPR023397">
    <property type="entry name" value="SAM-dep_MeTrfase_MraW_recog"/>
</dbReference>
<dbReference type="InterPro" id="IPR029063">
    <property type="entry name" value="SAM-dependent_MTases_sf"/>
</dbReference>
<dbReference type="NCBIfam" id="TIGR00006">
    <property type="entry name" value="16S rRNA (cytosine(1402)-N(4))-methyltransferase RsmH"/>
    <property type="match status" value="1"/>
</dbReference>
<dbReference type="PANTHER" id="PTHR11265:SF0">
    <property type="entry name" value="12S RRNA N4-METHYLCYTIDINE METHYLTRANSFERASE"/>
    <property type="match status" value="1"/>
</dbReference>
<dbReference type="PANTHER" id="PTHR11265">
    <property type="entry name" value="S-ADENOSYL-METHYLTRANSFERASE MRAW"/>
    <property type="match status" value="1"/>
</dbReference>
<dbReference type="Pfam" id="PF01795">
    <property type="entry name" value="Methyltransf_5"/>
    <property type="match status" value="1"/>
</dbReference>
<dbReference type="PIRSF" id="PIRSF004486">
    <property type="entry name" value="MraW"/>
    <property type="match status" value="1"/>
</dbReference>
<dbReference type="SUPFAM" id="SSF81799">
    <property type="entry name" value="Putative methyltransferase TM0872, insert domain"/>
    <property type="match status" value="1"/>
</dbReference>
<dbReference type="SUPFAM" id="SSF53335">
    <property type="entry name" value="S-adenosyl-L-methionine-dependent methyltransferases"/>
    <property type="match status" value="1"/>
</dbReference>
<keyword id="KW-0963">Cytoplasm</keyword>
<keyword id="KW-0489">Methyltransferase</keyword>
<keyword id="KW-0698">rRNA processing</keyword>
<keyword id="KW-0949">S-adenosyl-L-methionine</keyword>
<keyword id="KW-0808">Transferase</keyword>
<reference key="1">
    <citation type="journal article" date="2004" name="DNA Cell Biol.">
        <title>Cell division gene cluster in Spiroplasma kunkelii: functional characterization of ftsZ and the first report of ftsA in mollicutes.</title>
        <authorList>
            <person name="Zhao Y."/>
            <person name="Hammond R.W."/>
            <person name="Lee I.-M."/>
            <person name="Roe B.A."/>
            <person name="Lin S."/>
            <person name="Davis R.E."/>
        </authorList>
    </citation>
    <scope>NUCLEOTIDE SEQUENCE [GENOMIC DNA]</scope>
    <source>
        <strain>CR2-3x</strain>
    </source>
</reference>
<protein>
    <recommendedName>
        <fullName evidence="1">Ribosomal RNA small subunit methyltransferase H</fullName>
        <ecNumber evidence="1">2.1.1.199</ecNumber>
    </recommendedName>
    <alternativeName>
        <fullName evidence="1">16S rRNA m(4)C1402 methyltransferase</fullName>
    </alternativeName>
    <alternativeName>
        <fullName evidence="1">rRNA (cytosine-N(4)-)-methyltransferase RsmH</fullName>
    </alternativeName>
</protein>
<organism>
    <name type="scientific">Spiroplasma kunkelii</name>
    <dbReference type="NCBI Taxonomy" id="47834"/>
    <lineage>
        <taxon>Bacteria</taxon>
        <taxon>Bacillati</taxon>
        <taxon>Mycoplasmatota</taxon>
        <taxon>Mollicutes</taxon>
        <taxon>Entomoplasmatales</taxon>
        <taxon>Spiroplasmataceae</taxon>
        <taxon>Spiroplasma</taxon>
    </lineage>
</organism>
<comment type="function">
    <text evidence="1">Specifically methylates the N4 position of cytidine in position 1402 (C1402) of 16S rRNA.</text>
</comment>
<comment type="catalytic activity">
    <reaction evidence="1">
        <text>cytidine(1402) in 16S rRNA + S-adenosyl-L-methionine = N(4)-methylcytidine(1402) in 16S rRNA + S-adenosyl-L-homocysteine + H(+)</text>
        <dbReference type="Rhea" id="RHEA:42928"/>
        <dbReference type="Rhea" id="RHEA-COMP:10286"/>
        <dbReference type="Rhea" id="RHEA-COMP:10287"/>
        <dbReference type="ChEBI" id="CHEBI:15378"/>
        <dbReference type="ChEBI" id="CHEBI:57856"/>
        <dbReference type="ChEBI" id="CHEBI:59789"/>
        <dbReference type="ChEBI" id="CHEBI:74506"/>
        <dbReference type="ChEBI" id="CHEBI:82748"/>
        <dbReference type="EC" id="2.1.1.199"/>
    </reaction>
</comment>
<comment type="subcellular location">
    <subcellularLocation>
        <location evidence="1">Cytoplasm</location>
    </subcellularLocation>
</comment>
<comment type="similarity">
    <text evidence="1">Belongs to the methyltransferase superfamily. RsmH family.</text>
</comment>